<feature type="chain" id="PRO_1000034260" description="Transcription elongation factor GreA">
    <location>
        <begin position="1"/>
        <end position="158"/>
    </location>
</feature>
<feature type="coiled-coil region" evidence="1">
    <location>
        <begin position="47"/>
        <end position="68"/>
    </location>
</feature>
<gene>
    <name evidence="1" type="primary">greA</name>
    <name type="ordered locus">FP2366</name>
</gene>
<proteinExistence type="inferred from homology"/>
<sequence>MSTVSYYTAEGLKKLKDELEQLKAIERPKASADIAEARDKGDLSENAEYDAAKEAQGLLELKIKKMEEVYSNARLIDESQLDVSKALVLSHVKIKNQSNGMEMSYHLVAESEADLKTGKISVTSPIGKGLLGKSVGEIAEITVPNGILKFEVLEITRD</sequence>
<evidence type="ECO:0000255" key="1">
    <source>
        <dbReference type="HAMAP-Rule" id="MF_00105"/>
    </source>
</evidence>
<protein>
    <recommendedName>
        <fullName evidence="1">Transcription elongation factor GreA</fullName>
    </recommendedName>
    <alternativeName>
        <fullName evidence="1">Transcript cleavage factor GreA</fullName>
    </alternativeName>
</protein>
<organism>
    <name type="scientific">Flavobacterium psychrophilum (strain ATCC 49511 / DSM 21280 / CIP 103535 / JIP02/86)</name>
    <dbReference type="NCBI Taxonomy" id="402612"/>
    <lineage>
        <taxon>Bacteria</taxon>
        <taxon>Pseudomonadati</taxon>
        <taxon>Bacteroidota</taxon>
        <taxon>Flavobacteriia</taxon>
        <taxon>Flavobacteriales</taxon>
        <taxon>Flavobacteriaceae</taxon>
        <taxon>Flavobacterium</taxon>
    </lineage>
</organism>
<dbReference type="EMBL" id="AM398681">
    <property type="protein sequence ID" value="CAL44421.1"/>
    <property type="molecule type" value="Genomic_DNA"/>
</dbReference>
<dbReference type="RefSeq" id="WP_011964455.1">
    <property type="nucleotide sequence ID" value="NC_009613.3"/>
</dbReference>
<dbReference type="RefSeq" id="YP_001297222.1">
    <property type="nucleotide sequence ID" value="NC_009613.3"/>
</dbReference>
<dbReference type="SMR" id="A6H247"/>
<dbReference type="STRING" id="402612.FP2366"/>
<dbReference type="EnsemblBacteria" id="CAL44421">
    <property type="protein sequence ID" value="CAL44421"/>
    <property type="gene ID" value="FP2366"/>
</dbReference>
<dbReference type="GeneID" id="66553474"/>
<dbReference type="KEGG" id="fps:FP2366"/>
<dbReference type="PATRIC" id="fig|402612.5.peg.2423"/>
<dbReference type="eggNOG" id="COG0782">
    <property type="taxonomic scope" value="Bacteria"/>
</dbReference>
<dbReference type="HOGENOM" id="CLU_101379_2_0_10"/>
<dbReference type="OrthoDB" id="9808774at2"/>
<dbReference type="Proteomes" id="UP000006394">
    <property type="component" value="Chromosome"/>
</dbReference>
<dbReference type="GO" id="GO:0003677">
    <property type="term" value="F:DNA binding"/>
    <property type="evidence" value="ECO:0007669"/>
    <property type="project" value="UniProtKB-UniRule"/>
</dbReference>
<dbReference type="GO" id="GO:0070063">
    <property type="term" value="F:RNA polymerase binding"/>
    <property type="evidence" value="ECO:0007669"/>
    <property type="project" value="InterPro"/>
</dbReference>
<dbReference type="GO" id="GO:0006354">
    <property type="term" value="P:DNA-templated transcription elongation"/>
    <property type="evidence" value="ECO:0007669"/>
    <property type="project" value="TreeGrafter"/>
</dbReference>
<dbReference type="GO" id="GO:0032784">
    <property type="term" value="P:regulation of DNA-templated transcription elongation"/>
    <property type="evidence" value="ECO:0007669"/>
    <property type="project" value="UniProtKB-UniRule"/>
</dbReference>
<dbReference type="FunFam" id="1.10.287.180:FF:000001">
    <property type="entry name" value="Transcription elongation factor GreA"/>
    <property type="match status" value="1"/>
</dbReference>
<dbReference type="FunFam" id="3.10.50.30:FF:000001">
    <property type="entry name" value="Transcription elongation factor GreA"/>
    <property type="match status" value="1"/>
</dbReference>
<dbReference type="Gene3D" id="3.10.50.30">
    <property type="entry name" value="Transcription elongation factor, GreA/GreB, C-terminal domain"/>
    <property type="match status" value="1"/>
</dbReference>
<dbReference type="Gene3D" id="1.10.287.180">
    <property type="entry name" value="Transcription elongation factor, GreA/GreB, N-terminal domain"/>
    <property type="match status" value="1"/>
</dbReference>
<dbReference type="HAMAP" id="MF_00105">
    <property type="entry name" value="GreA_GreB"/>
    <property type="match status" value="1"/>
</dbReference>
<dbReference type="InterPro" id="IPR036953">
    <property type="entry name" value="GreA/GreB_C_sf"/>
</dbReference>
<dbReference type="InterPro" id="IPR018151">
    <property type="entry name" value="TF_GreA/GreB_CS"/>
</dbReference>
<dbReference type="InterPro" id="IPR006359">
    <property type="entry name" value="Tscrpt_elong_fac_GreA"/>
</dbReference>
<dbReference type="InterPro" id="IPR028624">
    <property type="entry name" value="Tscrpt_elong_fac_GreA/B"/>
</dbReference>
<dbReference type="InterPro" id="IPR001437">
    <property type="entry name" value="Tscrpt_elong_fac_GreA/B_C"/>
</dbReference>
<dbReference type="InterPro" id="IPR023459">
    <property type="entry name" value="Tscrpt_elong_fac_GreA/B_fam"/>
</dbReference>
<dbReference type="InterPro" id="IPR022691">
    <property type="entry name" value="Tscrpt_elong_fac_GreA/B_N"/>
</dbReference>
<dbReference type="InterPro" id="IPR036805">
    <property type="entry name" value="Tscrpt_elong_fac_GreA/B_N_sf"/>
</dbReference>
<dbReference type="NCBIfam" id="TIGR01462">
    <property type="entry name" value="greA"/>
    <property type="match status" value="1"/>
</dbReference>
<dbReference type="NCBIfam" id="NF001261">
    <property type="entry name" value="PRK00226.1-2"/>
    <property type="match status" value="1"/>
</dbReference>
<dbReference type="NCBIfam" id="NF001263">
    <property type="entry name" value="PRK00226.1-4"/>
    <property type="match status" value="1"/>
</dbReference>
<dbReference type="PANTHER" id="PTHR30437">
    <property type="entry name" value="TRANSCRIPTION ELONGATION FACTOR GREA"/>
    <property type="match status" value="1"/>
</dbReference>
<dbReference type="PANTHER" id="PTHR30437:SF4">
    <property type="entry name" value="TRANSCRIPTION ELONGATION FACTOR GREA"/>
    <property type="match status" value="1"/>
</dbReference>
<dbReference type="Pfam" id="PF01272">
    <property type="entry name" value="GreA_GreB"/>
    <property type="match status" value="1"/>
</dbReference>
<dbReference type="Pfam" id="PF03449">
    <property type="entry name" value="GreA_GreB_N"/>
    <property type="match status" value="1"/>
</dbReference>
<dbReference type="PIRSF" id="PIRSF006092">
    <property type="entry name" value="GreA_GreB"/>
    <property type="match status" value="1"/>
</dbReference>
<dbReference type="SUPFAM" id="SSF54534">
    <property type="entry name" value="FKBP-like"/>
    <property type="match status" value="1"/>
</dbReference>
<dbReference type="SUPFAM" id="SSF46557">
    <property type="entry name" value="GreA transcript cleavage protein, N-terminal domain"/>
    <property type="match status" value="1"/>
</dbReference>
<dbReference type="PROSITE" id="PS00830">
    <property type="entry name" value="GREAB_2"/>
    <property type="match status" value="1"/>
</dbReference>
<accession>A6H247</accession>
<comment type="function">
    <text evidence="1">Necessary for efficient RNA polymerase transcription elongation past template-encoded arresting sites. The arresting sites in DNA have the property of trapping a certain fraction of elongating RNA polymerases that pass through, resulting in locked ternary complexes. Cleavage of the nascent transcript by cleavage factors such as GreA or GreB allows the resumption of elongation from the new 3'terminus. GreA releases sequences of 2 to 3 nucleotides.</text>
</comment>
<comment type="similarity">
    <text evidence="1">Belongs to the GreA/GreB family.</text>
</comment>
<name>GREA_FLAPJ</name>
<keyword id="KW-0175">Coiled coil</keyword>
<keyword id="KW-0238">DNA-binding</keyword>
<keyword id="KW-1185">Reference proteome</keyword>
<keyword id="KW-0804">Transcription</keyword>
<keyword id="KW-0805">Transcription regulation</keyword>
<reference key="1">
    <citation type="journal article" date="2007" name="Nat. Biotechnol.">
        <title>Complete genome sequence of the fish pathogen Flavobacterium psychrophilum.</title>
        <authorList>
            <person name="Duchaud E."/>
            <person name="Boussaha M."/>
            <person name="Loux V."/>
            <person name="Bernardet J.-F."/>
            <person name="Michel C."/>
            <person name="Kerouault B."/>
            <person name="Mondot S."/>
            <person name="Nicolas P."/>
            <person name="Bossy R."/>
            <person name="Caron C."/>
            <person name="Bessieres P."/>
            <person name="Gibrat J.-F."/>
            <person name="Claverol S."/>
            <person name="Dumetz F."/>
            <person name="Le Henaff M."/>
            <person name="Benmansour A."/>
        </authorList>
    </citation>
    <scope>NUCLEOTIDE SEQUENCE [LARGE SCALE GENOMIC DNA]</scope>
    <source>
        <strain>ATCC 49511 / DSM 21280 / CIP 103535 / JIP02/86</strain>
    </source>
</reference>